<name>TM59L_BOVIN</name>
<proteinExistence type="evidence at transcript level"/>
<dbReference type="EMBL" id="BC120018">
    <property type="protein sequence ID" value="AAI20019.1"/>
    <property type="molecule type" value="mRNA"/>
</dbReference>
<dbReference type="RefSeq" id="NP_001068769.1">
    <property type="nucleotide sequence ID" value="NM_001075301.1"/>
</dbReference>
<dbReference type="FunCoup" id="Q0VCT2">
    <property type="interactions" value="292"/>
</dbReference>
<dbReference type="STRING" id="9913.ENSBTAP00000010124"/>
<dbReference type="GlyCosmos" id="Q0VCT2">
    <property type="glycosylation" value="1 site, No reported glycans"/>
</dbReference>
<dbReference type="GlyGen" id="Q0VCT2">
    <property type="glycosylation" value="1 site"/>
</dbReference>
<dbReference type="PaxDb" id="9913-ENSBTAP00000010124"/>
<dbReference type="Ensembl" id="ENSBTAT00000010124.7">
    <property type="protein sequence ID" value="ENSBTAP00000010124.5"/>
    <property type="gene ID" value="ENSBTAG00000007698.7"/>
</dbReference>
<dbReference type="GeneID" id="507157"/>
<dbReference type="KEGG" id="bta:507157"/>
<dbReference type="CTD" id="25789"/>
<dbReference type="VEuPathDB" id="HostDB:ENSBTAG00000007698"/>
<dbReference type="VGNC" id="VGNC:36100">
    <property type="gene designation" value="TMEM59L"/>
</dbReference>
<dbReference type="eggNOG" id="ENOG502S08T">
    <property type="taxonomic scope" value="Eukaryota"/>
</dbReference>
<dbReference type="GeneTree" id="ENSGT00390000008279"/>
<dbReference type="HOGENOM" id="CLU_059747_0_0_1"/>
<dbReference type="InParanoid" id="Q0VCT2"/>
<dbReference type="OMA" id="DNAHKVN"/>
<dbReference type="OrthoDB" id="6371519at2759"/>
<dbReference type="TreeFam" id="TF331226"/>
<dbReference type="Proteomes" id="UP000009136">
    <property type="component" value="Chromosome 7"/>
</dbReference>
<dbReference type="Bgee" id="ENSBTAG00000007698">
    <property type="expression patterns" value="Expressed in Ammon's horn and 91 other cell types or tissues"/>
</dbReference>
<dbReference type="GO" id="GO:0000139">
    <property type="term" value="C:Golgi membrane"/>
    <property type="evidence" value="ECO:0007669"/>
    <property type="project" value="UniProtKB-SubCell"/>
</dbReference>
<dbReference type="GO" id="GO:0001658">
    <property type="term" value="P:branching involved in ureteric bud morphogenesis"/>
    <property type="evidence" value="ECO:0007669"/>
    <property type="project" value="Ensembl"/>
</dbReference>
<dbReference type="InterPro" id="IPR022065">
    <property type="entry name" value="Uncharacterised_TMEM59"/>
</dbReference>
<dbReference type="PANTHER" id="PTHR28652:SF1">
    <property type="entry name" value="TRANSMEMBRANE PROTEIN 59-LIKE"/>
    <property type="match status" value="1"/>
</dbReference>
<dbReference type="PANTHER" id="PTHR28652">
    <property type="entry name" value="TRANSMEMBRANE PROTEIN 59-LIKE PROTEIN"/>
    <property type="match status" value="1"/>
</dbReference>
<dbReference type="Pfam" id="PF12280">
    <property type="entry name" value="BSMAP"/>
    <property type="match status" value="1"/>
</dbReference>
<reference key="1">
    <citation type="submission" date="2006-08" db="EMBL/GenBank/DDBJ databases">
        <authorList>
            <consortium name="NIH - Mammalian Gene Collection (MGC) project"/>
        </authorList>
    </citation>
    <scope>NUCLEOTIDE SEQUENCE [LARGE SCALE MRNA]</scope>
    <source>
        <strain>Hereford</strain>
        <tissue>Fetal cerebellum</tissue>
    </source>
</reference>
<organism>
    <name type="scientific">Bos taurus</name>
    <name type="common">Bovine</name>
    <dbReference type="NCBI Taxonomy" id="9913"/>
    <lineage>
        <taxon>Eukaryota</taxon>
        <taxon>Metazoa</taxon>
        <taxon>Chordata</taxon>
        <taxon>Craniata</taxon>
        <taxon>Vertebrata</taxon>
        <taxon>Euteleostomi</taxon>
        <taxon>Mammalia</taxon>
        <taxon>Eutheria</taxon>
        <taxon>Laurasiatheria</taxon>
        <taxon>Artiodactyla</taxon>
        <taxon>Ruminantia</taxon>
        <taxon>Pecora</taxon>
        <taxon>Bovidae</taxon>
        <taxon>Bovinae</taxon>
        <taxon>Bos</taxon>
    </lineage>
</organism>
<sequence>MDSVALMPLLLLLLLQPPPATPAPPVRDPFALQLGDTQNCQLRCRDRYPKPQLAQEELGEDPIQSRRAKAYDRAVLTSACERGCRLFSICRFVARSSKPNATQAECEAACVEAYVKETEQQACSEGCWSQNPEPEPEPELEQKRKVLEAPSGALSLLDLFSTLCNDLVNSAQGFVSSTWTYYLQTDNGKVVVFQTQPVVESLGHEGARLQRVEVTWRGSHPEALEVHVDPVGPLDKVRKAKIRVKTSSKAKVESDELQDNDFLSCMSRRSGLPRWILACCLFLSVLVMLWLSCSTLVTAPGQHLKFQPLTLEQHKGYMVEPEWSLYPPPSHAYADSPPPYKLKLDLTKL</sequence>
<feature type="signal peptide" evidence="2">
    <location>
        <begin position="1"/>
        <end position="22"/>
    </location>
</feature>
<feature type="chain" id="PRO_0000282920" description="Transmembrane protein 59-like">
    <location>
        <begin position="23"/>
        <end position="349"/>
    </location>
</feature>
<feature type="transmembrane region" description="Helical" evidence="2">
    <location>
        <begin position="276"/>
        <end position="296"/>
    </location>
</feature>
<feature type="short sequence motif" description="Microbody targeting signal" evidence="2">
    <location>
        <begin position="347"/>
        <end position="349"/>
    </location>
</feature>
<feature type="glycosylation site" description="N-linked (GlcNAc...) asparagine" evidence="2">
    <location>
        <position position="100"/>
    </location>
</feature>
<keyword id="KW-0325">Glycoprotein</keyword>
<keyword id="KW-0333">Golgi apparatus</keyword>
<keyword id="KW-0472">Membrane</keyword>
<keyword id="KW-1185">Reference proteome</keyword>
<keyword id="KW-0732">Signal</keyword>
<keyword id="KW-0812">Transmembrane</keyword>
<keyword id="KW-1133">Transmembrane helix</keyword>
<gene>
    <name type="primary">TMEM59L</name>
</gene>
<comment type="function">
    <text evidence="1">Modulates the O-glycosylation and complex N-glycosylation steps occurring during the Golgi maturation of APP. Inhibits APP transport to the cell surface and further shedding (By similarity).</text>
</comment>
<comment type="subcellular location">
    <subcellularLocation>
        <location evidence="1">Golgi apparatus membrane</location>
        <topology evidence="1">Single-pass type I membrane protein</topology>
    </subcellularLocation>
</comment>
<comment type="similarity">
    <text evidence="3">Belongs to the TMEM59 family.</text>
</comment>
<protein>
    <recommendedName>
        <fullName>Transmembrane protein 59-like</fullName>
    </recommendedName>
</protein>
<evidence type="ECO:0000250" key="1"/>
<evidence type="ECO:0000255" key="2"/>
<evidence type="ECO:0000305" key="3"/>
<accession>Q0VCT2</accession>